<name>Y2240_PHOPR</name>
<dbReference type="EC" id="7.-.-.-"/>
<dbReference type="EMBL" id="CR378670">
    <property type="protein sequence ID" value="CAG20626.1"/>
    <property type="molecule type" value="Genomic_DNA"/>
</dbReference>
<dbReference type="RefSeq" id="WP_011218916.1">
    <property type="nucleotide sequence ID" value="NC_006370.1"/>
</dbReference>
<dbReference type="SMR" id="Q6LQ00"/>
<dbReference type="STRING" id="298386.PBPRA2240"/>
<dbReference type="KEGG" id="ppr:PBPRA2240"/>
<dbReference type="eggNOG" id="COG1122">
    <property type="taxonomic scope" value="Bacteria"/>
</dbReference>
<dbReference type="HOGENOM" id="CLU_000604_86_7_6"/>
<dbReference type="Proteomes" id="UP000000593">
    <property type="component" value="Chromosome 1"/>
</dbReference>
<dbReference type="GO" id="GO:0043190">
    <property type="term" value="C:ATP-binding cassette (ABC) transporter complex"/>
    <property type="evidence" value="ECO:0007669"/>
    <property type="project" value="TreeGrafter"/>
</dbReference>
<dbReference type="GO" id="GO:0005524">
    <property type="term" value="F:ATP binding"/>
    <property type="evidence" value="ECO:0007669"/>
    <property type="project" value="UniProtKB-KW"/>
</dbReference>
<dbReference type="GO" id="GO:0016887">
    <property type="term" value="F:ATP hydrolysis activity"/>
    <property type="evidence" value="ECO:0007669"/>
    <property type="project" value="InterPro"/>
</dbReference>
<dbReference type="GO" id="GO:0042626">
    <property type="term" value="F:ATPase-coupled transmembrane transporter activity"/>
    <property type="evidence" value="ECO:0007669"/>
    <property type="project" value="TreeGrafter"/>
</dbReference>
<dbReference type="CDD" id="cd03225">
    <property type="entry name" value="ABC_cobalt_CbiO_domain1"/>
    <property type="match status" value="2"/>
</dbReference>
<dbReference type="FunFam" id="3.40.50.300:FF:001422">
    <property type="entry name" value="Cobalt ABC transporter ATP-binding protein"/>
    <property type="match status" value="1"/>
</dbReference>
<dbReference type="FunFam" id="3.40.50.300:FF:000224">
    <property type="entry name" value="Energy-coupling factor transporter ATP-binding protein EcfA"/>
    <property type="match status" value="1"/>
</dbReference>
<dbReference type="Gene3D" id="3.40.50.300">
    <property type="entry name" value="P-loop containing nucleotide triphosphate hydrolases"/>
    <property type="match status" value="2"/>
</dbReference>
<dbReference type="InterPro" id="IPR003593">
    <property type="entry name" value="AAA+_ATPase"/>
</dbReference>
<dbReference type="InterPro" id="IPR022216">
    <property type="entry name" value="ABC_Co_transporter"/>
</dbReference>
<dbReference type="InterPro" id="IPR003439">
    <property type="entry name" value="ABC_transporter-like_ATP-bd"/>
</dbReference>
<dbReference type="InterPro" id="IPR017871">
    <property type="entry name" value="ABC_transporter-like_CS"/>
</dbReference>
<dbReference type="InterPro" id="IPR015856">
    <property type="entry name" value="ABC_transpr_CbiO/EcfA_su"/>
</dbReference>
<dbReference type="InterPro" id="IPR050095">
    <property type="entry name" value="ECF_ABC_transporter_ATP-bd"/>
</dbReference>
<dbReference type="InterPro" id="IPR027417">
    <property type="entry name" value="P-loop_NTPase"/>
</dbReference>
<dbReference type="NCBIfam" id="NF010167">
    <property type="entry name" value="PRK13648.1"/>
    <property type="match status" value="2"/>
</dbReference>
<dbReference type="PANTHER" id="PTHR43553:SF26">
    <property type="entry name" value="ABC TRANSPORTER ATP-BINDING PROTEIN BC_2655-RELATED"/>
    <property type="match status" value="1"/>
</dbReference>
<dbReference type="PANTHER" id="PTHR43553">
    <property type="entry name" value="HEAVY METAL TRANSPORTER"/>
    <property type="match status" value="1"/>
</dbReference>
<dbReference type="Pfam" id="PF00005">
    <property type="entry name" value="ABC_tran"/>
    <property type="match status" value="2"/>
</dbReference>
<dbReference type="Pfam" id="PF12558">
    <property type="entry name" value="DUF3744"/>
    <property type="match status" value="1"/>
</dbReference>
<dbReference type="SMART" id="SM00382">
    <property type="entry name" value="AAA"/>
    <property type="match status" value="2"/>
</dbReference>
<dbReference type="SUPFAM" id="SSF52540">
    <property type="entry name" value="P-loop containing nucleoside triphosphate hydrolases"/>
    <property type="match status" value="2"/>
</dbReference>
<dbReference type="PROSITE" id="PS00211">
    <property type="entry name" value="ABC_TRANSPORTER_1"/>
    <property type="match status" value="2"/>
</dbReference>
<dbReference type="PROSITE" id="PS50893">
    <property type="entry name" value="ABC_TRANSPORTER_2"/>
    <property type="match status" value="2"/>
</dbReference>
<accession>Q6LQ00</accession>
<keyword id="KW-0067">ATP-binding</keyword>
<keyword id="KW-0997">Cell inner membrane</keyword>
<keyword id="KW-1003">Cell membrane</keyword>
<keyword id="KW-0472">Membrane</keyword>
<keyword id="KW-0547">Nucleotide-binding</keyword>
<keyword id="KW-1185">Reference proteome</keyword>
<keyword id="KW-0677">Repeat</keyword>
<keyword id="KW-1278">Translocase</keyword>
<keyword id="KW-0813">Transport</keyword>
<sequence>MTIEFSNFTFKYWALEKPTLKNINLTIGKGEKVVIVGPSGSGKSTLGQCLNGLIPFAVKGDCSGSLKINGKDTKSLDLHQCTNIVGTVLQDTDGQFVGLSVGEDIAFALENQMVIQEDMHTIVKDTAKMVELDDILDVSPFDLSGGQKQRVSLAGVMVDDVDILLFDEPLASLDPKTGKAAIDIIDHLHRDTGKTVIIIEHRLEDVLHRPVDRIIMMEQGEIVANMTPDQLIASDLLEQHGIREPLYISALKAAGCQITEDDKPAYFSTLNLDKFKPQIENWYHQSFVACTPENSERLLTVNNLSYSYDGIKNTLDDVSFHINKGEFVSILGKNGSGKSTITRLIMGVLEPDTGSIFMNGQDLAQSSIFERSQKIGIVLQNPNHMISHHMIFDEIASGLRNRGINEATVERKVFDILELCGLKKYRHWPIDALSYGQKKRVTIATILVLEPELLILDEPTAGQDYHHYTLMMEFVRELNRKLGITILIISHDMHLVLEYTQRAIVIANSQLLADAPVNTIFSQPALLEKANLTVTSLYSLAHAMGIERIDNFIHCFIEHEAKNK</sequence>
<organism>
    <name type="scientific">Photobacterium profundum (strain SS9)</name>
    <dbReference type="NCBI Taxonomy" id="298386"/>
    <lineage>
        <taxon>Bacteria</taxon>
        <taxon>Pseudomonadati</taxon>
        <taxon>Pseudomonadota</taxon>
        <taxon>Gammaproteobacteria</taxon>
        <taxon>Vibrionales</taxon>
        <taxon>Vibrionaceae</taxon>
        <taxon>Photobacterium</taxon>
    </lineage>
</organism>
<proteinExistence type="inferred from homology"/>
<feature type="chain" id="PRO_0000092055" description="Putative ABC transporter ATP-binding protein PBPRA2240">
    <location>
        <begin position="1"/>
        <end position="564"/>
    </location>
</feature>
<feature type="domain" description="ABC transporter 1" evidence="2">
    <location>
        <begin position="3"/>
        <end position="244"/>
    </location>
</feature>
<feature type="domain" description="ABC transporter 2" evidence="2">
    <location>
        <begin position="299"/>
        <end position="533"/>
    </location>
</feature>
<feature type="binding site" evidence="2">
    <location>
        <begin position="37"/>
        <end position="44"/>
    </location>
    <ligand>
        <name>ATP</name>
        <dbReference type="ChEBI" id="CHEBI:30616"/>
        <label>1</label>
    </ligand>
</feature>
<feature type="binding site" evidence="2">
    <location>
        <begin position="332"/>
        <end position="339"/>
    </location>
    <ligand>
        <name>ATP</name>
        <dbReference type="ChEBI" id="CHEBI:30616"/>
        <label>2</label>
    </ligand>
</feature>
<gene>
    <name type="ordered locus">PBPRA2240</name>
</gene>
<reference key="1">
    <citation type="journal article" date="2005" name="Science">
        <title>Life at depth: Photobacterium profundum genome sequence and expression analysis.</title>
        <authorList>
            <person name="Vezzi A."/>
            <person name="Campanaro S."/>
            <person name="D'Angelo M."/>
            <person name="Simonato F."/>
            <person name="Vitulo N."/>
            <person name="Lauro F.M."/>
            <person name="Cestaro A."/>
            <person name="Malacrida G."/>
            <person name="Simionati B."/>
            <person name="Cannata N."/>
            <person name="Romualdi C."/>
            <person name="Bartlett D.H."/>
            <person name="Valle G."/>
        </authorList>
    </citation>
    <scope>NUCLEOTIDE SEQUENCE [LARGE SCALE GENOMIC DNA]</scope>
    <source>
        <strain>ATCC BAA-1253 / SS9</strain>
    </source>
</reference>
<comment type="function">
    <text evidence="1">Probably part of an ABC transporter complex. Responsible for energy coupling to the transport system (By similarity).</text>
</comment>
<comment type="subcellular location">
    <subcellularLocation>
        <location evidence="1">Cell inner membrane</location>
        <topology evidence="1">Peripheral membrane protein</topology>
    </subcellularLocation>
</comment>
<comment type="similarity">
    <text evidence="3">Belongs to the ABC transporter superfamily.</text>
</comment>
<evidence type="ECO:0000250" key="1"/>
<evidence type="ECO:0000255" key="2">
    <source>
        <dbReference type="PROSITE-ProRule" id="PRU00434"/>
    </source>
</evidence>
<evidence type="ECO:0000305" key="3"/>
<protein>
    <recommendedName>
        <fullName>Putative ABC transporter ATP-binding protein PBPRA2240</fullName>
        <ecNumber>7.-.-.-</ecNumber>
    </recommendedName>
</protein>